<organism>
    <name type="scientific">Tritrichomonas foetus</name>
    <name type="common">Trichomonas foetus</name>
    <name type="synonym">Tritrichomonas suis</name>
    <dbReference type="NCBI Taxonomy" id="56690"/>
    <lineage>
        <taxon>Eukaryota</taxon>
        <taxon>Metamonada</taxon>
        <taxon>Parabasalia</taxon>
        <taxon>Tritrichomonadida</taxon>
        <taxon>Tritrichomonadidae</taxon>
        <taxon>Tritrichomonas</taxon>
    </lineage>
</organism>
<feature type="chain" id="PRO_0000093676" description="Inosine-5'-monophosphate dehydrogenase">
    <location>
        <begin position="1"/>
        <end position="503"/>
    </location>
</feature>
<feature type="domain" description="CBS 1" evidence="1">
    <location>
        <begin position="103"/>
        <end position="163"/>
    </location>
</feature>
<feature type="domain" description="CBS 2" evidence="1">
    <location>
        <begin position="167"/>
        <end position="228"/>
    </location>
</feature>
<feature type="active site" description="Thioimidate intermediate" evidence="1 3 5">
    <location>
        <position position="319"/>
    </location>
</feature>
<feature type="active site" description="Proton acceptor" evidence="1">
    <location>
        <position position="418"/>
    </location>
</feature>
<feature type="binding site" description="in other chain" evidence="5">
    <location>
        <position position="20"/>
    </location>
    <ligand>
        <name>K(+)</name>
        <dbReference type="ChEBI" id="CHEBI:29103"/>
        <label>2</label>
        <note>ligand shared between two tetrameric partners</note>
    </ligand>
</feature>
<feature type="binding site" description="in other chain" evidence="5">
    <location>
        <position position="22"/>
    </location>
    <ligand>
        <name>K(+)</name>
        <dbReference type="ChEBI" id="CHEBI:29103"/>
        <label>2</label>
        <note>ligand shared between two tetrameric partners</note>
    </ligand>
</feature>
<feature type="binding site">
    <location>
        <begin position="261"/>
        <end position="263"/>
    </location>
    <ligand>
        <name>NAD(+)</name>
        <dbReference type="ChEBI" id="CHEBI:57540"/>
    </ligand>
</feature>
<feature type="binding site" evidence="5">
    <location>
        <position position="264"/>
    </location>
    <ligand>
        <name>K(+)</name>
        <dbReference type="ChEBI" id="CHEBI:29103"/>
        <label>2</label>
        <note>ligand shared between two tetrameric partners</note>
    </ligand>
</feature>
<feature type="binding site" evidence="5">
    <location>
        <position position="266"/>
    </location>
    <ligand>
        <name>K(+)</name>
        <dbReference type="ChEBI" id="CHEBI:29103"/>
        <label>2</label>
        <note>ligand shared between two tetrameric partners</note>
    </ligand>
</feature>
<feature type="binding site">
    <location>
        <begin position="312"/>
        <end position="314"/>
    </location>
    <ligand>
        <name>NAD(+)</name>
        <dbReference type="ChEBI" id="CHEBI:57540"/>
    </ligand>
</feature>
<feature type="binding site" description="in other chain" evidence="5">
    <location>
        <position position="314"/>
    </location>
    <ligand>
        <name>K(+)</name>
        <dbReference type="ChEBI" id="CHEBI:29103"/>
        <label>1</label>
        <note>ligand shared between two tetrameric partners</note>
    </ligand>
</feature>
<feature type="binding site" description="in other chain" evidence="5">
    <location>
        <position position="316"/>
    </location>
    <ligand>
        <name>K(+)</name>
        <dbReference type="ChEBI" id="CHEBI:29103"/>
        <label>1</label>
        <note>ligand shared between two tetrameric partners</note>
    </ligand>
</feature>
<feature type="binding site">
    <location>
        <position position="317"/>
    </location>
    <ligand>
        <name>IMP</name>
        <dbReference type="ChEBI" id="CHEBI:58053"/>
    </ligand>
</feature>
<feature type="binding site" description="in other chain" evidence="5">
    <location>
        <position position="319"/>
    </location>
    <ligand>
        <name>K(+)</name>
        <dbReference type="ChEBI" id="CHEBI:29103"/>
        <label>1</label>
        <note>ligand shared between two tetrameric partners</note>
    </ligand>
</feature>
<feature type="binding site">
    <location>
        <begin position="358"/>
        <end position="360"/>
    </location>
    <ligand>
        <name>IMP</name>
        <dbReference type="ChEBI" id="CHEBI:58053"/>
    </ligand>
</feature>
<feature type="binding site">
    <location>
        <begin position="381"/>
        <end position="382"/>
    </location>
    <ligand>
        <name>IMP</name>
        <dbReference type="ChEBI" id="CHEBI:58053"/>
    </ligand>
</feature>
<feature type="binding site">
    <location>
        <begin position="405"/>
        <end position="409"/>
    </location>
    <ligand>
        <name>IMP</name>
        <dbReference type="ChEBI" id="CHEBI:58053"/>
    </ligand>
</feature>
<feature type="binding site">
    <location>
        <position position="431"/>
    </location>
    <ligand>
        <name>IMP</name>
        <dbReference type="ChEBI" id="CHEBI:58053"/>
    </ligand>
</feature>
<feature type="binding site" description="in other chain" evidence="5">
    <location>
        <position position="460"/>
    </location>
    <ligand>
        <name>K(+)</name>
        <dbReference type="ChEBI" id="CHEBI:29103"/>
        <label>2</label>
        <note>ligand shared between two tetrameric partners</note>
    </ligand>
</feature>
<feature type="binding site" evidence="5">
    <location>
        <position position="485"/>
    </location>
    <ligand>
        <name>K(+)</name>
        <dbReference type="ChEBI" id="CHEBI:29103"/>
        <label>1</label>
        <note>ligand shared between two tetrameric partners</note>
    </ligand>
</feature>
<feature type="binding site" evidence="5">
    <location>
        <position position="486"/>
    </location>
    <ligand>
        <name>K(+)</name>
        <dbReference type="ChEBI" id="CHEBI:29103"/>
        <label>1</label>
        <note>ligand shared between two tetrameric partners</note>
    </ligand>
</feature>
<feature type="binding site" evidence="5">
    <location>
        <position position="487"/>
    </location>
    <ligand>
        <name>K(+)</name>
        <dbReference type="ChEBI" id="CHEBI:29103"/>
        <label>1</label>
        <note>ligand shared between two tetrameric partners</note>
    </ligand>
</feature>
<feature type="mutagenesis site" description="Has less than 0.06% of the wild-type activity." evidence="2">
    <original>C</original>
    <variation>S</variation>
    <location>
        <position position="319"/>
    </location>
</feature>
<feature type="helix" evidence="10">
    <location>
        <begin position="12"/>
        <end position="14"/>
    </location>
</feature>
<feature type="strand" evidence="10">
    <location>
        <begin position="15"/>
        <end position="17"/>
    </location>
</feature>
<feature type="helix" evidence="10">
    <location>
        <begin position="28"/>
        <end position="30"/>
    </location>
</feature>
<feature type="strand" evidence="10">
    <location>
        <begin position="49"/>
        <end position="56"/>
    </location>
</feature>
<feature type="turn" evidence="10">
    <location>
        <begin position="60"/>
        <end position="62"/>
    </location>
</feature>
<feature type="helix" evidence="10">
    <location>
        <begin position="65"/>
        <end position="73"/>
    </location>
</feature>
<feature type="strand" evidence="10">
    <location>
        <begin position="77"/>
        <end position="80"/>
    </location>
</feature>
<feature type="strand" evidence="9">
    <location>
        <begin position="82"/>
        <end position="84"/>
    </location>
</feature>
<feature type="helix" evidence="10">
    <location>
        <begin position="86"/>
        <end position="97"/>
    </location>
</feature>
<feature type="turn" evidence="10">
    <location>
        <begin position="98"/>
        <end position="100"/>
    </location>
</feature>
<feature type="strand" evidence="10">
    <location>
        <begin position="235"/>
        <end position="238"/>
    </location>
</feature>
<feature type="strand" evidence="10">
    <location>
        <begin position="240"/>
        <end position="242"/>
    </location>
</feature>
<feature type="helix" evidence="10">
    <location>
        <begin position="243"/>
        <end position="253"/>
    </location>
</feature>
<feature type="strand" evidence="10">
    <location>
        <begin position="256"/>
        <end position="260"/>
    </location>
</feature>
<feature type="helix" evidence="10">
    <location>
        <begin position="268"/>
        <end position="281"/>
    </location>
</feature>
<feature type="helix" evidence="10">
    <location>
        <begin position="282"/>
        <end position="284"/>
    </location>
</feature>
<feature type="strand" evidence="10">
    <location>
        <begin position="287"/>
        <end position="292"/>
    </location>
</feature>
<feature type="helix" evidence="10">
    <location>
        <begin position="295"/>
        <end position="304"/>
    </location>
</feature>
<feature type="strand" evidence="10">
    <location>
        <begin position="307"/>
        <end position="311"/>
    </location>
</feature>
<feature type="helix" evidence="11">
    <location>
        <begin position="317"/>
        <end position="321"/>
    </location>
</feature>
<feature type="turn" evidence="10">
    <location>
        <begin position="322"/>
        <end position="325"/>
    </location>
</feature>
<feature type="helix" evidence="10">
    <location>
        <begin position="331"/>
        <end position="349"/>
    </location>
</feature>
<feature type="strand" evidence="10">
    <location>
        <begin position="350"/>
        <end position="352"/>
    </location>
</feature>
<feature type="strand" evidence="10">
    <location>
        <begin position="355"/>
        <end position="359"/>
    </location>
</feature>
<feature type="helix" evidence="10">
    <location>
        <begin position="364"/>
        <end position="372"/>
    </location>
</feature>
<feature type="strand" evidence="10">
    <location>
        <begin position="376"/>
        <end position="381"/>
    </location>
</feature>
<feature type="helix" evidence="10">
    <location>
        <begin position="382"/>
        <end position="385"/>
    </location>
</feature>
<feature type="strand" evidence="10">
    <location>
        <begin position="390"/>
        <end position="392"/>
    </location>
</feature>
<feature type="strand" evidence="10">
    <location>
        <begin position="394"/>
        <end position="397"/>
    </location>
</feature>
<feature type="strand" evidence="10">
    <location>
        <begin position="400"/>
        <end position="406"/>
    </location>
</feature>
<feature type="helix" evidence="10">
    <location>
        <begin position="411"/>
        <end position="414"/>
    </location>
</feature>
<feature type="helix" evidence="12">
    <location>
        <begin position="416"/>
        <end position="419"/>
    </location>
</feature>
<feature type="strand" evidence="12">
    <location>
        <begin position="421"/>
        <end position="423"/>
    </location>
</feature>
<feature type="strand" evidence="10">
    <location>
        <begin position="434"/>
        <end position="438"/>
    </location>
</feature>
<feature type="helix" evidence="10">
    <location>
        <begin position="443"/>
        <end position="460"/>
    </location>
</feature>
<feature type="helix" evidence="10">
    <location>
        <begin position="466"/>
        <end position="472"/>
    </location>
</feature>
<feature type="strand" evidence="10">
    <location>
        <begin position="475"/>
        <end position="477"/>
    </location>
</feature>
<feature type="turn" evidence="11">
    <location>
        <begin position="480"/>
        <end position="482"/>
    </location>
</feature>
<feature type="turn" evidence="10">
    <location>
        <begin position="484"/>
        <end position="486"/>
    </location>
</feature>
<feature type="strand" evidence="12">
    <location>
        <begin position="490"/>
        <end position="493"/>
    </location>
</feature>
<protein>
    <recommendedName>
        <fullName evidence="1">Inosine-5'-monophosphate dehydrogenase</fullName>
        <shortName evidence="1">IMP dehydrogenase</shortName>
        <shortName evidence="1">IMPD</shortName>
        <shortName evidence="1">IMPDH</shortName>
        <ecNumber evidence="1">1.1.1.205</ecNumber>
    </recommendedName>
</protein>
<evidence type="ECO:0000255" key="1">
    <source>
        <dbReference type="HAMAP-Rule" id="MF_03156"/>
    </source>
</evidence>
<evidence type="ECO:0000269" key="2">
    <source>
    </source>
</evidence>
<evidence type="ECO:0000269" key="3">
    <source>
    </source>
</evidence>
<evidence type="ECO:0000269" key="4">
    <source>
    </source>
</evidence>
<evidence type="ECO:0000269" key="5">
    <source>
    </source>
</evidence>
<evidence type="ECO:0000269" key="6">
    <source>
    </source>
</evidence>
<evidence type="ECO:0000269" key="7">
    <source>
    </source>
</evidence>
<evidence type="ECO:0000305" key="8">
    <source>
    </source>
</evidence>
<evidence type="ECO:0007829" key="9">
    <source>
        <dbReference type="PDB" id="1ME7"/>
    </source>
</evidence>
<evidence type="ECO:0007829" key="10">
    <source>
        <dbReference type="PDB" id="1ME8"/>
    </source>
</evidence>
<evidence type="ECO:0007829" key="11">
    <source>
        <dbReference type="PDB" id="1MEH"/>
    </source>
</evidence>
<evidence type="ECO:0007829" key="12">
    <source>
        <dbReference type="PDB" id="1PVN"/>
    </source>
</evidence>
<keyword id="KW-0002">3D-structure</keyword>
<keyword id="KW-0129">CBS domain</keyword>
<keyword id="KW-0963">Cytoplasm</keyword>
<keyword id="KW-0332">GMP biosynthesis</keyword>
<keyword id="KW-0479">Metal-binding</keyword>
<keyword id="KW-0520">NAD</keyword>
<keyword id="KW-0560">Oxidoreductase</keyword>
<keyword id="KW-0630">Potassium</keyword>
<keyword id="KW-0658">Purine biosynthesis</keyword>
<keyword id="KW-0677">Repeat</keyword>
<proteinExistence type="evidence at protein level"/>
<name>IMDH_TRIFO</name>
<reference key="1">
    <citation type="journal article" date="1994" name="Exp. Parasitol.">
        <title>Cloning, sequencing, and structural analysis of the DNA encoding inosine monophosphate dehydrogenase (EC 1.1.1.205) from Tritrichomonas foetus.</title>
        <authorList>
            <person name="Beck J.T."/>
            <person name="Zhao S."/>
            <person name="Wang C.C."/>
        </authorList>
    </citation>
    <scope>NUCLEOTIDE SEQUENCE [GENOMIC DNA]</scope>
    <source>
        <strain>UNK</strain>
    </source>
</reference>
<reference key="2">
    <citation type="submission" date="1996-02" db="EMBL/GenBank/DDBJ databases">
        <authorList>
            <person name="Wang C.C."/>
        </authorList>
    </citation>
    <scope>SEQUENCE REVISION</scope>
</reference>
<reference key="3">
    <citation type="journal article" date="1990" name="Biochem. Pharmacol.">
        <title>A novel mechanism of mycophenolic acid resistance in the protozoan parasite Tritrichomonas foetus.</title>
        <authorList>
            <person name="Hedstrom L."/>
            <person name="Cheung K.S."/>
            <person name="Wang C.C."/>
        </authorList>
    </citation>
    <scope>ACTIVITY REGULATION</scope>
</reference>
<reference key="4">
    <citation type="journal article" date="1995" name="Biochemistry">
        <title>Identification of the IMP binding site in the IMP dehydrogenase from Tritrichomonas foetus.</title>
        <authorList>
            <person name="Huete-Perez J.A."/>
            <person name="Wu J.C."/>
            <person name="Whitby F.G."/>
            <person name="Wang C.C."/>
        </authorList>
    </citation>
    <scope>CHARACTERIZATION</scope>
</reference>
<reference key="5">
    <citation type="journal article" date="1999" name="Biochemistry">
        <title>Kinetic mechanism of Tritrichomonas foetus inosine 5'-monophosphate dehydrogenase.</title>
        <authorList>
            <person name="Digits J.A."/>
            <person name="Hedstrom L."/>
        </authorList>
    </citation>
    <scope>FUNCTION</scope>
    <scope>BIOPHYSICOCHEMICAL PROPERTIES</scope>
    <scope>MUTAGENESIS OF CYS-319</scope>
</reference>
<reference key="6">
    <citation type="journal article" date="2004" name="Biochem. J.">
        <title>Inosine 5'-monophosphate dehydrogenase binds nucleic acids in vitro and in vivo.</title>
        <authorList>
            <person name="McLean J.E."/>
            <person name="Hamaguchi N."/>
            <person name="Belenky P."/>
            <person name="Mortimer S.E."/>
            <person name="Stanton M."/>
            <person name="Hedstrom L."/>
        </authorList>
    </citation>
    <scope>NUCLEIC ACID-BINDING</scope>
</reference>
<reference key="7">
    <citation type="journal article" date="1997" name="Biochemistry">
        <title>Crystal structure of Tritrichomonas foetus inosine-5'-monophosphate dehydrogenase and the enzyme-product complex.</title>
        <authorList>
            <person name="Whitby F.G."/>
            <person name="Luecke H."/>
            <person name="Kuhn P."/>
            <person name="Somoza J.R."/>
            <person name="Huete-Perez J.A."/>
            <person name="Phillips J.D."/>
            <person name="Hill C.P."/>
            <person name="Fletterick R.J."/>
            <person name="Wang C.C."/>
        </authorList>
    </citation>
    <scope>X-RAY CRYSTALLOGRAPHY (2.3 ANGSTROMS)</scope>
</reference>
<reference key="8">
    <citation type="journal article" date="2002" name="Biochemistry">
        <title>Crystal structure of a ternary complex of Tritrichomonas foetus inosine 5'-monophosphate dehydrogenase: NAD+ orients the active site loop for catalysis.</title>
        <authorList>
            <person name="Gan L."/>
            <person name="Petsko G.A."/>
            <person name="Hedstrom L."/>
        </authorList>
    </citation>
    <scope>X-RAY CRYSTALLOGRAPHY (2.2 ANGSTROMS) OF 4-377 IN COMPLEX WITH SUBSTRATE AND INHIBITOR</scope>
    <scope>POTASSIUM-BINDING</scope>
</reference>
<reference key="9">
    <citation type="journal article" date="2002" name="J. Biol. Chem.">
        <title>Crystal structure of Tritrichomonas foetus inosine monophosphate dehydrogenase in complex with the inhibitor ribavirin monophosphate reveals a catalysis-dependent ion-binding site.</title>
        <authorList>
            <person name="Prosise G.L."/>
            <person name="Wu J.Z."/>
            <person name="Luecke H."/>
        </authorList>
    </citation>
    <scope>X-RAY CRYSTALLOGRAPHY (2.15 ANGSTROMS) IN COMPLEX WITH INHIBITOR</scope>
    <scope>ACTIVE SITE</scope>
</reference>
<reference key="10">
    <citation type="journal article" date="2003" name="Biochemistry">
        <title>The immunosuppressive agent mizoribine monophosphate forms a transition state analogue complex with inosine monophosphate dehydrogenase.</title>
        <authorList>
            <person name="Gan L."/>
            <person name="Seyedsayamdost M.R."/>
            <person name="Shuto S."/>
            <person name="Matsuda A."/>
            <person name="Petsko G.A."/>
            <person name="Hedstrom L."/>
        </authorList>
    </citation>
    <scope>X-RAY CRYSTALLOGRAPHY (2.0 ANGSTROMS) OF 4-377 IN COMPLEX WITH INHIBITOR (MIZORIBINE MONOPHOSPHATE; MZP) AND POTASSIUM</scope>
    <scope>ACTIVE SITE</scope>
</reference>
<reference key="11">
    <citation type="journal article" date="2003" name="J. Mol. Biol.">
        <title>Crystal structures of Tritrichomonas foetus inosine monophosphate dehydrogenase in complex with substrate, cofactor and analogs: a structural basis for the random-in ordered-out kinetic mechanism.</title>
        <authorList>
            <person name="Prosise G.L."/>
            <person name="Luecke H."/>
        </authorList>
    </citation>
    <scope>X-RAY CRYSTALLOGRAPHY (2.2 ANGSTROMS) OF 1-483 IN COMPLEX WITH SUBSTRATE; PRODUCT; INHIBITOR (MYCOPHENOLIC ACID; MPA) AND NAD(+)</scope>
</reference>
<dbReference type="EC" id="1.1.1.205" evidence="1"/>
<dbReference type="EMBL" id="L18917">
    <property type="protein sequence ID" value="AAB01581.1"/>
    <property type="molecule type" value="Genomic_DNA"/>
</dbReference>
<dbReference type="PIR" id="A58910">
    <property type="entry name" value="A58910"/>
</dbReference>
<dbReference type="PDB" id="1AK5">
    <property type="method" value="X-ray"/>
    <property type="resolution" value="2.30 A"/>
    <property type="chains" value="A=1-503"/>
</dbReference>
<dbReference type="PDB" id="1LRT">
    <property type="method" value="X-ray"/>
    <property type="resolution" value="2.20 A"/>
    <property type="chains" value="A/B/C/D=2-503"/>
</dbReference>
<dbReference type="PDB" id="1ME7">
    <property type="method" value="X-ray"/>
    <property type="resolution" value="2.15 A"/>
    <property type="chains" value="A=1-503"/>
</dbReference>
<dbReference type="PDB" id="1ME8">
    <property type="method" value="X-ray"/>
    <property type="resolution" value="1.90 A"/>
    <property type="chains" value="A=1-503"/>
</dbReference>
<dbReference type="PDB" id="1ME9">
    <property type="method" value="X-ray"/>
    <property type="resolution" value="2.20 A"/>
    <property type="chains" value="A=1-503"/>
</dbReference>
<dbReference type="PDB" id="1MEH">
    <property type="method" value="X-ray"/>
    <property type="resolution" value="1.95 A"/>
    <property type="chains" value="A=1-503"/>
</dbReference>
<dbReference type="PDB" id="1MEI">
    <property type="method" value="X-ray"/>
    <property type="resolution" value="2.20 A"/>
    <property type="chains" value="A=1-503"/>
</dbReference>
<dbReference type="PDB" id="1MEW">
    <property type="method" value="X-ray"/>
    <property type="resolution" value="2.15 A"/>
    <property type="chains" value="A=1-503"/>
</dbReference>
<dbReference type="PDB" id="1PVN">
    <property type="method" value="X-ray"/>
    <property type="resolution" value="2.00 A"/>
    <property type="chains" value="A/B/C/D=2-503"/>
</dbReference>
<dbReference type="PDBsum" id="1AK5"/>
<dbReference type="PDBsum" id="1LRT"/>
<dbReference type="PDBsum" id="1ME7"/>
<dbReference type="PDBsum" id="1ME8"/>
<dbReference type="PDBsum" id="1ME9"/>
<dbReference type="PDBsum" id="1MEH"/>
<dbReference type="PDBsum" id="1MEI"/>
<dbReference type="PDBsum" id="1MEW"/>
<dbReference type="PDBsum" id="1PVN"/>
<dbReference type="SMR" id="P50097"/>
<dbReference type="VEuPathDB" id="TrichDB:TRFO_05937"/>
<dbReference type="SABIO-RK" id="P50097"/>
<dbReference type="UniPathway" id="UPA00601">
    <property type="reaction ID" value="UER00295"/>
</dbReference>
<dbReference type="EvolutionaryTrace" id="P50097"/>
<dbReference type="GO" id="GO:0005737">
    <property type="term" value="C:cytoplasm"/>
    <property type="evidence" value="ECO:0007669"/>
    <property type="project" value="UniProtKB-SubCell"/>
</dbReference>
<dbReference type="GO" id="GO:0032991">
    <property type="term" value="C:protein-containing complex"/>
    <property type="evidence" value="ECO:0000314"/>
    <property type="project" value="CAFA"/>
</dbReference>
<dbReference type="GO" id="GO:0042802">
    <property type="term" value="F:identical protein binding"/>
    <property type="evidence" value="ECO:0000314"/>
    <property type="project" value="CAFA"/>
</dbReference>
<dbReference type="GO" id="GO:0003938">
    <property type="term" value="F:IMP dehydrogenase activity"/>
    <property type="evidence" value="ECO:0007669"/>
    <property type="project" value="UniProtKB-UniRule"/>
</dbReference>
<dbReference type="GO" id="GO:0046872">
    <property type="term" value="F:metal ion binding"/>
    <property type="evidence" value="ECO:0007669"/>
    <property type="project" value="UniProtKB-UniRule"/>
</dbReference>
<dbReference type="GO" id="GO:0000166">
    <property type="term" value="F:nucleotide binding"/>
    <property type="evidence" value="ECO:0000314"/>
    <property type="project" value="UniProtKB"/>
</dbReference>
<dbReference type="GO" id="GO:0006177">
    <property type="term" value="P:GMP biosynthetic process"/>
    <property type="evidence" value="ECO:0007669"/>
    <property type="project" value="UniProtKB-UniRule"/>
</dbReference>
<dbReference type="GO" id="GO:0006183">
    <property type="term" value="P:GTP biosynthetic process"/>
    <property type="evidence" value="ECO:0007669"/>
    <property type="project" value="TreeGrafter"/>
</dbReference>
<dbReference type="CDD" id="cd04601">
    <property type="entry name" value="CBS_pair_IMPDH"/>
    <property type="match status" value="1"/>
</dbReference>
<dbReference type="CDD" id="cd00381">
    <property type="entry name" value="IMPDH"/>
    <property type="match status" value="1"/>
</dbReference>
<dbReference type="DisProt" id="DP00399"/>
<dbReference type="FunFam" id="3.20.20.70:FF:000340">
    <property type="entry name" value="IMP dehydrogenase"/>
    <property type="match status" value="1"/>
</dbReference>
<dbReference type="Gene3D" id="3.20.20.70">
    <property type="entry name" value="Aldolase class I"/>
    <property type="match status" value="1"/>
</dbReference>
<dbReference type="HAMAP" id="MF_01964">
    <property type="entry name" value="IMPDH"/>
    <property type="match status" value="1"/>
</dbReference>
<dbReference type="InterPro" id="IPR013785">
    <property type="entry name" value="Aldolase_TIM"/>
</dbReference>
<dbReference type="InterPro" id="IPR000644">
    <property type="entry name" value="CBS_dom"/>
</dbReference>
<dbReference type="InterPro" id="IPR046342">
    <property type="entry name" value="CBS_dom_sf"/>
</dbReference>
<dbReference type="InterPro" id="IPR005990">
    <property type="entry name" value="IMP_DH"/>
</dbReference>
<dbReference type="InterPro" id="IPR015875">
    <property type="entry name" value="IMP_DH/GMP_Rdtase_CS"/>
</dbReference>
<dbReference type="InterPro" id="IPR001093">
    <property type="entry name" value="IMP_DH_GMPRt"/>
</dbReference>
<dbReference type="NCBIfam" id="NF005493">
    <property type="entry name" value="PRK07107.1"/>
    <property type="match status" value="1"/>
</dbReference>
<dbReference type="PANTHER" id="PTHR11911:SF111">
    <property type="entry name" value="INOSINE-5'-MONOPHOSPHATE DEHYDROGENASE"/>
    <property type="match status" value="1"/>
</dbReference>
<dbReference type="PANTHER" id="PTHR11911">
    <property type="entry name" value="INOSINE-5-MONOPHOSPHATE DEHYDROGENASE RELATED"/>
    <property type="match status" value="1"/>
</dbReference>
<dbReference type="Pfam" id="PF00571">
    <property type="entry name" value="CBS"/>
    <property type="match status" value="1"/>
</dbReference>
<dbReference type="Pfam" id="PF00478">
    <property type="entry name" value="IMPDH"/>
    <property type="match status" value="1"/>
</dbReference>
<dbReference type="PIRSF" id="PIRSF000130">
    <property type="entry name" value="IMPDH"/>
    <property type="match status" value="1"/>
</dbReference>
<dbReference type="SMART" id="SM01240">
    <property type="entry name" value="IMPDH"/>
    <property type="match status" value="1"/>
</dbReference>
<dbReference type="SUPFAM" id="SSF54631">
    <property type="entry name" value="CBS-domain pair"/>
    <property type="match status" value="1"/>
</dbReference>
<dbReference type="SUPFAM" id="SSF51412">
    <property type="entry name" value="Inosine monophosphate dehydrogenase (IMPDH)"/>
    <property type="match status" value="1"/>
</dbReference>
<dbReference type="PROSITE" id="PS51371">
    <property type="entry name" value="CBS"/>
    <property type="match status" value="2"/>
</dbReference>
<dbReference type="PROSITE" id="PS00487">
    <property type="entry name" value="IMP_DH_GMP_RED"/>
    <property type="match status" value="1"/>
</dbReference>
<comment type="function">
    <text evidence="1 2">Catalyzes the conversion of inosine 5'-phosphate (IMP) to xanthosine 5'-phosphate (XMP), the first committed and rate-limiting step in the de novo synthesis of guanine nucleotides, and therefore plays an important role in the regulation of cell growth. Could also have a single-stranded nucleic acid-binding activity and could play a role in RNA and/or DNA metabolism.</text>
</comment>
<comment type="catalytic activity">
    <reaction evidence="1">
        <text>IMP + NAD(+) + H2O = XMP + NADH + H(+)</text>
        <dbReference type="Rhea" id="RHEA:11708"/>
        <dbReference type="ChEBI" id="CHEBI:15377"/>
        <dbReference type="ChEBI" id="CHEBI:15378"/>
        <dbReference type="ChEBI" id="CHEBI:57464"/>
        <dbReference type="ChEBI" id="CHEBI:57540"/>
        <dbReference type="ChEBI" id="CHEBI:57945"/>
        <dbReference type="ChEBI" id="CHEBI:58053"/>
        <dbReference type="EC" id="1.1.1.205"/>
    </reaction>
</comment>
<comment type="cofactor">
    <cofactor evidence="1">
        <name>K(+)</name>
        <dbReference type="ChEBI" id="CHEBI:29103"/>
    </cofactor>
</comment>
<comment type="activity regulation">
    <text evidence="1 7">Mycophenolic acid (MPA) is a non-competitive inhibitor that prevents formation of the closed enzyme conformation by binding to the same site as the amobile flap. In contrast, mizoribine monophosphate (MZP) is a competitive inhibitor that induces the closed conformation. MPA is a potent inhibitor of mammalian IMPDHs but a poor inhibitor of the bacterial enzymes. MZP is a more potent inhibitor of bacterial IMPDH.</text>
</comment>
<comment type="biophysicochemical properties">
    <kinetics>
        <KM evidence="2">1.7 uM for Inosine 5'-phosphate</KM>
        <KM evidence="2">150 uM for NAD(+)</KM>
    </kinetics>
</comment>
<comment type="pathway">
    <text evidence="1">Purine metabolism; XMP biosynthesis via de novo pathway; XMP from IMP: step 1/1.</text>
</comment>
<comment type="subunit">
    <text evidence="1 3 4 5 6">Homotetramer.</text>
</comment>
<comment type="subcellular location">
    <subcellularLocation>
        <location evidence="1">Cytoplasm</location>
    </subcellularLocation>
</comment>
<comment type="miscellaneous">
    <text evidence="8">Contains 2 potassium ions bound at each subunit interface. The second potassium binding site is not conserved and not observed in crystal structures of IMPDHs from other organisms (PubMed:12403633).</text>
</comment>
<comment type="similarity">
    <text evidence="1">Belongs to the IMPDH/GMPR family.</text>
</comment>
<gene>
    <name evidence="1" type="primary">IMPDH</name>
</gene>
<accession>P50097</accession>
<sequence length="503" mass="55473">MAKYYNEPCHTFNEYLLIPGLSTVDCIPSNVNLSTPLVKFQKGQQSEINLKIPLVSAIMQSVSGEKMAIALAREGGISFIFGSQSIESQAAMVHAVKNFKAGFVVSDSNVKPDQTFADVLAISQRTTHNTVAVTDDGTPHGVLLGLVTQRDYPIDLTQTETKVSDMMTPFSKLVTAHQDTKLSEANKIIWEKKLNALPIIDDDQHLRYIVFRKDYDRSQVCHNELVDSQKRYLVGAGINTRDFRERVPALVEAGADVLCIDSSDGFSEWQKITIGWIREKYGDKVKVGAGNIVDGEGFRYLADAGADFIKIGIGGGSICITREQKGIGRGQATAVIDVVAERNKYFEETGIYIPVCSDGGIVYDYHMTLALAMGADFIMLGRYFARFEESPTRKVTINGSVMKEYWGEGSSRARNWQRYDLGGKQKLSFEEGVDSYVPYAGKLKDNVEASLNKVKSTMCNCGALTIPQLQSKAKITLVSSVSIVEGGAHDVIVKDRINDYHPK</sequence>